<gene>
    <name evidence="1" type="primary">aroC</name>
    <name type="ordered locus">BVU_2537</name>
</gene>
<sequence length="358" mass="39167">MFNSFGNIFRLTSFGESHGPGVGGVIDGFPAGIKIDMDFVQQELNRRRPGQSLLTTSRKEPDTVEFLSGIFEGKSTGCPIGFVVWNKNQHSNDYENIKNLFRPSHADYTYMQKYGIRDYRGGGRSSARETISRVVAGALAKLALKQLGISVTAYTSQVGPVKLDKDYKSYNLDLIETNDVRCPDPEKAKEMAELIWKIKGEGDTIGGVVSCVIKGCPIGLGQPVFGKLHAALGNAMLSINAVKGFSYGQGFDSMELKGSEQNDVFYNNNGRVETKSNYSGGIQGGISNGQDIYFRVAFKPVATILMEQHTVNINGTDTTMKAKGRHDACVLPRAVPIVEAMAAMTILDYYLIDRTTQL</sequence>
<organism>
    <name type="scientific">Phocaeicola vulgatus (strain ATCC 8482 / DSM 1447 / JCM 5826 / CCUG 4940 / NBRC 14291 / NCTC 11154)</name>
    <name type="common">Bacteroides vulgatus</name>
    <dbReference type="NCBI Taxonomy" id="435590"/>
    <lineage>
        <taxon>Bacteria</taxon>
        <taxon>Pseudomonadati</taxon>
        <taxon>Bacteroidota</taxon>
        <taxon>Bacteroidia</taxon>
        <taxon>Bacteroidales</taxon>
        <taxon>Bacteroidaceae</taxon>
        <taxon>Phocaeicola</taxon>
    </lineage>
</organism>
<evidence type="ECO:0000255" key="1">
    <source>
        <dbReference type="HAMAP-Rule" id="MF_00300"/>
    </source>
</evidence>
<proteinExistence type="inferred from homology"/>
<comment type="function">
    <text evidence="1">Catalyzes the anti-1,4-elimination of the C-3 phosphate and the C-6 proR hydrogen from 5-enolpyruvylshikimate-3-phosphate (EPSP) to yield chorismate, which is the branch point compound that serves as the starting substrate for the three terminal pathways of aromatic amino acid biosynthesis. This reaction introduces a second double bond into the aromatic ring system.</text>
</comment>
<comment type="catalytic activity">
    <reaction evidence="1">
        <text>5-O-(1-carboxyvinyl)-3-phosphoshikimate = chorismate + phosphate</text>
        <dbReference type="Rhea" id="RHEA:21020"/>
        <dbReference type="ChEBI" id="CHEBI:29748"/>
        <dbReference type="ChEBI" id="CHEBI:43474"/>
        <dbReference type="ChEBI" id="CHEBI:57701"/>
        <dbReference type="EC" id="4.2.3.5"/>
    </reaction>
</comment>
<comment type="cofactor">
    <cofactor evidence="1">
        <name>FMNH2</name>
        <dbReference type="ChEBI" id="CHEBI:57618"/>
    </cofactor>
    <text evidence="1">Reduced FMN (FMNH(2)).</text>
</comment>
<comment type="pathway">
    <text evidence="1">Metabolic intermediate biosynthesis; chorismate biosynthesis; chorismate from D-erythrose 4-phosphate and phosphoenolpyruvate: step 7/7.</text>
</comment>
<comment type="subunit">
    <text evidence="1">Homotetramer.</text>
</comment>
<comment type="similarity">
    <text evidence="1">Belongs to the chorismate synthase family.</text>
</comment>
<reference key="1">
    <citation type="journal article" date="2007" name="PLoS Biol.">
        <title>Evolution of symbiotic bacteria in the distal human intestine.</title>
        <authorList>
            <person name="Xu J."/>
            <person name="Mahowald M.A."/>
            <person name="Ley R.E."/>
            <person name="Lozupone C.A."/>
            <person name="Hamady M."/>
            <person name="Martens E.C."/>
            <person name="Henrissat B."/>
            <person name="Coutinho P.M."/>
            <person name="Minx P."/>
            <person name="Latreille P."/>
            <person name="Cordum H."/>
            <person name="Van Brunt A."/>
            <person name="Kim K."/>
            <person name="Fulton R.S."/>
            <person name="Fulton L.A."/>
            <person name="Clifton S.W."/>
            <person name="Wilson R.K."/>
            <person name="Knight R.D."/>
            <person name="Gordon J.I."/>
        </authorList>
    </citation>
    <scope>NUCLEOTIDE SEQUENCE [LARGE SCALE GENOMIC DNA]</scope>
    <source>
        <strain>ATCC 8482 / DSM 1447 / JCM 5826 / CCUG 4940 / NBRC 14291 / NCTC 11154</strain>
    </source>
</reference>
<protein>
    <recommendedName>
        <fullName evidence="1">Chorismate synthase</fullName>
        <shortName evidence="1">CS</shortName>
        <ecNumber evidence="1">4.2.3.5</ecNumber>
    </recommendedName>
    <alternativeName>
        <fullName evidence="1">5-enolpyruvylshikimate-3-phosphate phospholyase</fullName>
    </alternativeName>
</protein>
<name>AROC_PHOV8</name>
<feature type="chain" id="PRO_1000022460" description="Chorismate synthase">
    <location>
        <begin position="1"/>
        <end position="358"/>
    </location>
</feature>
<feature type="binding site" evidence="1">
    <location>
        <position position="47"/>
    </location>
    <ligand>
        <name>NADP(+)</name>
        <dbReference type="ChEBI" id="CHEBI:58349"/>
    </ligand>
</feature>
<feature type="binding site" evidence="1">
    <location>
        <begin position="124"/>
        <end position="126"/>
    </location>
    <ligand>
        <name>FMN</name>
        <dbReference type="ChEBI" id="CHEBI:58210"/>
    </ligand>
</feature>
<feature type="binding site" evidence="1">
    <location>
        <begin position="240"/>
        <end position="241"/>
    </location>
    <ligand>
        <name>FMN</name>
        <dbReference type="ChEBI" id="CHEBI:58210"/>
    </ligand>
</feature>
<feature type="binding site" evidence="1">
    <location>
        <position position="284"/>
    </location>
    <ligand>
        <name>FMN</name>
        <dbReference type="ChEBI" id="CHEBI:58210"/>
    </ligand>
</feature>
<feature type="binding site" evidence="1">
    <location>
        <begin position="299"/>
        <end position="303"/>
    </location>
    <ligand>
        <name>FMN</name>
        <dbReference type="ChEBI" id="CHEBI:58210"/>
    </ligand>
</feature>
<feature type="binding site" evidence="1">
    <location>
        <position position="325"/>
    </location>
    <ligand>
        <name>FMN</name>
        <dbReference type="ChEBI" id="CHEBI:58210"/>
    </ligand>
</feature>
<keyword id="KW-0028">Amino-acid biosynthesis</keyword>
<keyword id="KW-0057">Aromatic amino acid biosynthesis</keyword>
<keyword id="KW-0274">FAD</keyword>
<keyword id="KW-0285">Flavoprotein</keyword>
<keyword id="KW-0288">FMN</keyword>
<keyword id="KW-0456">Lyase</keyword>
<keyword id="KW-0521">NADP</keyword>
<dbReference type="EC" id="4.2.3.5" evidence="1"/>
<dbReference type="EMBL" id="CP000139">
    <property type="protein sequence ID" value="ABR40194.1"/>
    <property type="molecule type" value="Genomic_DNA"/>
</dbReference>
<dbReference type="RefSeq" id="WP_005847197.1">
    <property type="nucleotide sequence ID" value="NZ_JANSWM010000062.1"/>
</dbReference>
<dbReference type="SMR" id="A6L3D0"/>
<dbReference type="STRING" id="435590.BVU_2537"/>
<dbReference type="PaxDb" id="435590-BVU_2537"/>
<dbReference type="GeneID" id="5303501"/>
<dbReference type="KEGG" id="bvu:BVU_2537"/>
<dbReference type="eggNOG" id="COG0082">
    <property type="taxonomic scope" value="Bacteria"/>
</dbReference>
<dbReference type="HOGENOM" id="CLU_034547_0_2_10"/>
<dbReference type="BioCyc" id="BVUL435590:G1G59-2641-MONOMER"/>
<dbReference type="UniPathway" id="UPA00053">
    <property type="reaction ID" value="UER00090"/>
</dbReference>
<dbReference type="Proteomes" id="UP000002861">
    <property type="component" value="Chromosome"/>
</dbReference>
<dbReference type="GO" id="GO:0005829">
    <property type="term" value="C:cytosol"/>
    <property type="evidence" value="ECO:0007669"/>
    <property type="project" value="TreeGrafter"/>
</dbReference>
<dbReference type="GO" id="GO:0004107">
    <property type="term" value="F:chorismate synthase activity"/>
    <property type="evidence" value="ECO:0007669"/>
    <property type="project" value="UniProtKB-UniRule"/>
</dbReference>
<dbReference type="GO" id="GO:0010181">
    <property type="term" value="F:FMN binding"/>
    <property type="evidence" value="ECO:0007669"/>
    <property type="project" value="TreeGrafter"/>
</dbReference>
<dbReference type="GO" id="GO:0008652">
    <property type="term" value="P:amino acid biosynthetic process"/>
    <property type="evidence" value="ECO:0007669"/>
    <property type="project" value="UniProtKB-KW"/>
</dbReference>
<dbReference type="GO" id="GO:0009073">
    <property type="term" value="P:aromatic amino acid family biosynthetic process"/>
    <property type="evidence" value="ECO:0007669"/>
    <property type="project" value="UniProtKB-KW"/>
</dbReference>
<dbReference type="GO" id="GO:0009423">
    <property type="term" value="P:chorismate biosynthetic process"/>
    <property type="evidence" value="ECO:0007669"/>
    <property type="project" value="UniProtKB-UniRule"/>
</dbReference>
<dbReference type="CDD" id="cd07304">
    <property type="entry name" value="Chorismate_synthase"/>
    <property type="match status" value="1"/>
</dbReference>
<dbReference type="FunFam" id="3.60.150.10:FF:000003">
    <property type="entry name" value="Chorismate synthase"/>
    <property type="match status" value="1"/>
</dbReference>
<dbReference type="Gene3D" id="3.60.150.10">
    <property type="entry name" value="Chorismate synthase AroC"/>
    <property type="match status" value="1"/>
</dbReference>
<dbReference type="HAMAP" id="MF_00300">
    <property type="entry name" value="Chorismate_synth"/>
    <property type="match status" value="1"/>
</dbReference>
<dbReference type="InterPro" id="IPR000453">
    <property type="entry name" value="Chorismate_synth"/>
</dbReference>
<dbReference type="InterPro" id="IPR035904">
    <property type="entry name" value="Chorismate_synth_AroC_sf"/>
</dbReference>
<dbReference type="InterPro" id="IPR020541">
    <property type="entry name" value="Chorismate_synthase_CS"/>
</dbReference>
<dbReference type="NCBIfam" id="TIGR00033">
    <property type="entry name" value="aroC"/>
    <property type="match status" value="1"/>
</dbReference>
<dbReference type="NCBIfam" id="NF003793">
    <property type="entry name" value="PRK05382.1"/>
    <property type="match status" value="1"/>
</dbReference>
<dbReference type="PANTHER" id="PTHR21085">
    <property type="entry name" value="CHORISMATE SYNTHASE"/>
    <property type="match status" value="1"/>
</dbReference>
<dbReference type="PANTHER" id="PTHR21085:SF0">
    <property type="entry name" value="CHORISMATE SYNTHASE"/>
    <property type="match status" value="1"/>
</dbReference>
<dbReference type="Pfam" id="PF01264">
    <property type="entry name" value="Chorismate_synt"/>
    <property type="match status" value="1"/>
</dbReference>
<dbReference type="PIRSF" id="PIRSF001456">
    <property type="entry name" value="Chorismate_synth"/>
    <property type="match status" value="1"/>
</dbReference>
<dbReference type="SUPFAM" id="SSF103263">
    <property type="entry name" value="Chorismate synthase, AroC"/>
    <property type="match status" value="1"/>
</dbReference>
<dbReference type="PROSITE" id="PS00787">
    <property type="entry name" value="CHORISMATE_SYNTHASE_1"/>
    <property type="match status" value="1"/>
</dbReference>
<dbReference type="PROSITE" id="PS00788">
    <property type="entry name" value="CHORISMATE_SYNTHASE_2"/>
    <property type="match status" value="1"/>
</dbReference>
<accession>A6L3D0</accession>